<reference key="1">
    <citation type="journal article" date="1991" name="Nucleic Acids Res.">
        <title>Isolation of cDNA clones encoding an enzyme from bovine cells that repairs oxidative DNA damage in vitro: homology with bacterial repair enzymes.</title>
        <authorList>
            <person name="Robson C.N."/>
            <person name="Milne A.M."/>
            <person name="Pappin D.J.C."/>
            <person name="Hickson I.D."/>
        </authorList>
    </citation>
    <scope>NUCLEOTIDE SEQUENCE [MRNA]</scope>
    <scope>PROTEIN SEQUENCE OF 2-19</scope>
    <source>
        <tissue>Thymus</tissue>
    </source>
</reference>
<reference key="2">
    <citation type="submission" date="2006-08" db="EMBL/GenBank/DDBJ databases">
        <authorList>
            <consortium name="NIH - Mammalian Gene Collection (MGC) project"/>
        </authorList>
    </citation>
    <scope>NUCLEOTIDE SEQUENCE [LARGE SCALE MRNA]</scope>
    <source>
        <strain>Hereford</strain>
        <tissue>Basal ganglia</tissue>
    </source>
</reference>
<reference key="3">
    <citation type="journal article" date="1987" name="Nucleic Acids Res.">
        <title>Purification and amino-terminal amino acid sequence of an apurinic/apyrimidinic endonuclease from calf thymus.</title>
        <authorList>
            <person name="Henner W.D."/>
            <person name="Kiker N.P."/>
            <person name="Jorgensen T.J."/>
            <person name="Munck J.-N."/>
        </authorList>
    </citation>
    <scope>PROTEIN SEQUENCE OF 2-23</scope>
    <source>
        <tissue>Thymus</tissue>
    </source>
</reference>
<reference key="4">
    <citation type="journal article" date="2006" name="Nucleic Acids Res.">
        <title>Identification and characterization of mitochondrial abasic (AP)-endonuclease in mammalian cells.</title>
        <authorList>
            <person name="Chattopadhyay R."/>
            <person name="Wiederhold L."/>
            <person name="Szczesny B."/>
            <person name="Boldogh I."/>
            <person name="Hazra T.K."/>
            <person name="Izumi T."/>
            <person name="Mitra S."/>
        </authorList>
    </citation>
    <scope>PROTEIN SEQUENCE OF 34-38</scope>
    <scope>FUNCTION</scope>
    <scope>SUBCELLULAR LOCATION</scope>
    <scope>TISSUE SPECIFICITY</scope>
    <source>
        <tissue>Liver</tissue>
    </source>
</reference>
<reference key="5">
    <citation type="journal article" date="2005" name="Biochem. Biophys. Res. Commun.">
        <title>Three-dimensional structure prediction of bovine AP lyase, BAP1: prediction of interaction with DNA and alterations as a result of Arg176-&gt;Ala, Asp282-&gt;Ala, and His308-&gt;Asn mutations.</title>
        <authorList>
            <person name="Khurshid R."/>
            <person name="Salim A."/>
            <person name="Abbasi A."/>
        </authorList>
    </citation>
    <scope>3D-STRUCTURE MODELING OF 40-318</scope>
</reference>
<accession>P23196</accession>
<accession>Q0IIJ5</accession>
<comment type="function">
    <text evidence="2 6">Multifunctional protein that plays a central role in the cellular response to oxidative stress. The two major activities of APEX1 are DNA repair and redox regulation of transcriptional factors. Functions as an apurinic/apyrimidinic (AP) endodeoxyribonuclease in the DNA base excision repair (BER) pathway of DNA lesions induced by oxidative and alkylating agents. Initiates repair of AP sites in DNA by catalyzing hydrolytic incision of the phosphodiester backbone immediately adjacent to the damage, generating a single-strand break with 5'-deoxyribose phosphate and 3'-hydroxyl ends. Also incises at AP sites in the DNA strand of DNA/RNA hybrids, single-stranded DNA regions of R-loop structures, and single-stranded RNA molecules. Has 3'-5' exoribonuclease activity on mismatched deoxyribonucleotides at the 3' termini of nicked or gapped DNA molecules during short-patch BER. Possesses DNA 3' phosphodiesterase activity capable of removing lesions (such as phosphoglycolate) blocking the 3' side of DNA strand breaks. May also play a role in the epigenetic regulation of gene expression by participating in DNA demethylation. Acts as a loading factor for POLB onto non-incised AP sites in DNA and stimulates the 5'-terminal deoxyribose 5'-phosphate (dRp) excision activity of POLB. Plays a role in the protection from granzyme-mediated cellular repair leading to cell death. Also involved in the DNA cleavage step of class switch recombination (CSR). On the other hand, APEX1 also exerts reversible nuclear redox activity to regulate DNA binding affinity and transcriptional activity of transcriptional factors by controlling the redox status of their DNA-binding domain, such as the FOS/JUN AP-1 complex after exposure to IR. Involved in calcium-dependent down-regulation of parathyroid hormone (PTH) expression by binding to negative calcium response elements (nCaREs). Together with HNRNPL or the dimer XRCC5/XRCC6, associates with nCaRE, acting as an activator of transcriptional repression. Stimulates the YBX1-mediated MDR1 promoter activity, when acetylated at Lys-6 and Lys-7, leading to drug resistance. Also acts as an endoribonuclease involved in the control of single-stranded RNA metabolism. Plays a role in regulating MYC mRNA turnover by preferentially cleaving in between UA and CA dinucleotides of the MYC coding region determinant (CRD). In association with NMD1, plays a role in the rRNA quality control process during cell cycle progression. Associates, together with YBX1, on the MDR1 promoter. Together with NPM1, associates with rRNA. Binds DNA and RNA (By similarity).</text>
</comment>
<comment type="catalytic activity">
    <reaction evidence="2">
        <text>Exonucleolytic cleavage in the 3'- to 5'-direction to yield nucleoside 5'-phosphates.</text>
        <dbReference type="EC" id="3.1.11.2"/>
    </reaction>
</comment>
<comment type="cofactor">
    <cofactor evidence="2">
        <name>Mg(2+)</name>
        <dbReference type="ChEBI" id="CHEBI:18420"/>
    </cofactor>
    <cofactor evidence="2">
        <name>Mn(2+)</name>
        <dbReference type="ChEBI" id="CHEBI:29035"/>
    </cofactor>
    <text evidence="2">Probably binds two magnesium or manganese ions per subunit.</text>
</comment>
<comment type="activity regulation">
    <text evidence="2">NPM1 stimulates endodeoxyribonuclease activity on double-stranded DNA with AP sites, but inhibits endoribonuclease activity on single-stranded RNA containing AP sites.</text>
</comment>
<comment type="subunit">
    <text evidence="2">Monomer. Homodimer; disulfide-linked. Component of the SET complex, composed of at least APEX1, SET, ANP32A, HMGB2, NME1 and TREX1. Associates with the dimer XRCC5/XRCC6 in a DNA-dependent manner. Interacts with SIRT1; the interaction is increased in the context of genotoxic stress. Interacts with HDAC1, HDAC2 and HDAC3; the interactions are not dependent on the APEX1 acetylation status. Interacts with XRCC1; the interaction is induced by SIRT1 and increased with the APEX1 acetylated form. Interacts with NPM1 (via N-terminal domain); the interaction is RNA-dependent and decreases in hydrogen peroxide-damaged cells. Interacts (via N-terminus) with YBX1 (via C-terminus); the interaction is increased in presence of APEX1 acetylated at Lys-6 and Lys-7. Interacts with HNRNPL; the interaction is DNA-dependent. Interacts (via N-terminus) with KPNA1 and KPNA2. Interacts with TXN; the interaction stimulates the FOS/JUN AP-1 complex DNA-binding activity in a redox-dependent manner. Interacts with GZMA, KRT8, MDM2, POLB, PRDX6, PRPF19, RPLP0, TOMM20 and WDR77. Binds to CDK5 (By similarity).</text>
</comment>
<comment type="subcellular location">
    <subcellularLocation>
        <location evidence="4 6">Nucleus</location>
    </subcellularLocation>
    <subcellularLocation>
        <location evidence="1">Nucleus</location>
        <location evidence="1">Nucleolus</location>
    </subcellularLocation>
    <subcellularLocation>
        <location evidence="4">Nucleus speckle</location>
    </subcellularLocation>
    <subcellularLocation>
        <location evidence="1">Endoplasmic reticulum</location>
    </subcellularLocation>
    <subcellularLocation>
        <location evidence="4">Cytoplasm</location>
    </subcellularLocation>
    <text>Detected in the cytoplasm of B-cells stimulated to switch. Colocalized with SIRT1 in the nucleus. Colocalized with YBX1 in nuclear speckles after genotoxic stress. Together with OGG1 is recruited to nuclear speckles in UVA-irradiated cells. Colocalized with nucleolin and NPM1 in the nucleolus. Its nucleolar localization is cell cycle dependent and requires active rRNA transcription. Colocalized with calreticulin in the endoplasmic reticulum. Translocation from the nucleus to the cytoplasm is stimulated in presence of nitric oxide (NO) and function in a CRM1-dependent manner, possibly as a consequence of demasking a nuclear export signal (amino acid position 64-80). S-nitrosylation at Cys-93 and Cys-310 regulates its nuclear-cytosolic shuttling. Ubiquitinated form is localized predominantly in the cytoplasm.</text>
</comment>
<comment type="subcellular location">
    <molecule>DNA repair nuclease/redox regulator APEX1, mitochondrial</molecule>
    <subcellularLocation>
        <location>Mitochondrion</location>
    </subcellularLocation>
    <text evidence="1">Translocation from the cytoplasm to the mitochondria is mediated by ROS signaling and cleavage mediated by granzyme A. Tom20-dependent translocated mitochondrial APEX1 level is significantly increased after genotoxic stress (By similarity). The cleaved APEX2 is only detected in mitochondria.</text>
</comment>
<comment type="tissue specificity">
    <text evidence="6">The mitochondrial form is expressed in liver (at protein level). Thymus.</text>
</comment>
<comment type="induction">
    <text>By several DNA damaging agents.</text>
</comment>
<comment type="domain">
    <text evidence="1">The N-terminus contains the redox activity while the C-terminus exerts the DNA AP-endodeoxyribonuclease activity; both function are independent in their actions. An unconventional mitochondrial targeting sequence (MTS) is harbored within the C-terminus, that appears to be masked by the N-terminal sequence containing the nuclear localization signal (NLS), that probably blocks the interaction between the MTS and Tom proteins (By similarity).</text>
</comment>
<comment type="PTM">
    <text evidence="2">Phosphorylated. Phosphorylation by kinase PKC or casein kinase CK2 results in enhanced redox activity that stimulates binding of the FOS/JUN AP-1 complex to its cognate binding site. AP-endodeoxyribonuclease activity is not affected by CK2-mediated phosphorylation. Phosphorylation of Thr-233 by CDK5 in response to MPP(+)/MPTP (1-methyl-4-phenylpyridinium) reduces AP-endodeoxyribonuclease activity resulting in accumulation of DNA damage and contributing to neuronal death (By similarity).</text>
</comment>
<comment type="PTM">
    <text evidence="2">Acetylated on Lys-6 and Lys-7. Acetylation is increased by the transcriptional coactivator EP300 acetyltransferase, genotoxic agents like H(2)O(2) and methyl methanesulfonate (MMS). Acetylation increases its binding affinity to the negative calcium response element (nCaRE) DNA promoter. The acetylated form induces a stronger binding of YBX1 to the Y-box sequence in the MDR1 promoter than the unacetylated form. Deacetylated on lysines. Lys-6 and Lys-7 are deacetylated by SIRT1 (By similarity).</text>
</comment>
<comment type="PTM">
    <text evidence="2">Cleaved at Lys-31 by granzyme A to create the mitochondrial form; leading in reduction of binding to DNA, AP endodeoxyribonuclease activity, redox activation of transcription factors and to enhanced cell death. Cleaved by granzyme K; leading to intracellular ROS accumulation and enhanced cell death after oxidative stress (By similarity).</text>
</comment>
<comment type="PTM">
    <text evidence="2">Cys-69 and Cys-93 are nitrosylated in response to nitric oxide (NO) and lead to the exposure of the nuclear export signal (NES).</text>
</comment>
<comment type="PTM">
    <text evidence="2">Ubiquitinated by MDM2; leading to translocation to the cytoplasm and proteasomal degradation.</text>
</comment>
<comment type="miscellaneous">
    <text evidence="7">The specific activity of the cleaved mitochondrial endodeoxyribonuclease appears to be about 3-fold higher than of the full-length form. Extract of mitochondria, but not of nuclei or cytosol, cleaves recombinant APEX1 to generate a mitochondrial APEX1-sized product.</text>
</comment>
<comment type="similarity">
    <text evidence="9">Belongs to the DNA repair enzymes AP/ExoA family.</text>
</comment>
<sequence>MPKRGKKGAVVEDAEEPKTEPEAKKSKAGAKKNEKEAVGEGAVLYEDPPDQKTSPSGKSATLKICSWNVDGLRAWIKKKGLDWVKEEAPDILCLQETKCSENKLPVELQELSGLSHQYWSAPSDKEGYSGVGLLSRQCPLKVSYGIGEEEHDQEGRVIVAEYDAFVLVTAYVPNAGRGLVRLEYRQRWDEAFRKFLKGLASRKPLVLCGDLNVAHEEIDLRNPKGNKKNAGFTPQERQGFGELLQAVPLTDSFRHLYPNTAYAYTFWTYMMNARSKNVGWRLDYFLLSQSVLPALCDSKIRSKALGSDHCPITLYLAL</sequence>
<proteinExistence type="evidence at protein level"/>
<organism>
    <name type="scientific">Bos taurus</name>
    <name type="common">Bovine</name>
    <dbReference type="NCBI Taxonomy" id="9913"/>
    <lineage>
        <taxon>Eukaryota</taxon>
        <taxon>Metazoa</taxon>
        <taxon>Chordata</taxon>
        <taxon>Craniata</taxon>
        <taxon>Vertebrata</taxon>
        <taxon>Euteleostomi</taxon>
        <taxon>Mammalia</taxon>
        <taxon>Eutheria</taxon>
        <taxon>Laurasiatheria</taxon>
        <taxon>Artiodactyla</taxon>
        <taxon>Ruminantia</taxon>
        <taxon>Pecora</taxon>
        <taxon>Bovidae</taxon>
        <taxon>Bovinae</taxon>
        <taxon>Bos</taxon>
    </lineage>
</organism>
<dbReference type="EC" id="3.1.11.2" evidence="2"/>
<dbReference type="EC" id="3.1.21.-" evidence="2"/>
<dbReference type="EMBL" id="X56685">
    <property type="protein sequence ID" value="CAA40014.1"/>
    <property type="molecule type" value="mRNA"/>
</dbReference>
<dbReference type="EMBL" id="BC122610">
    <property type="protein sequence ID" value="AAI22611.1"/>
    <property type="molecule type" value="mRNA"/>
</dbReference>
<dbReference type="PIR" id="S26830">
    <property type="entry name" value="S26830"/>
</dbReference>
<dbReference type="RefSeq" id="NP_788782.2">
    <property type="nucleotide sequence ID" value="NM_176609.3"/>
</dbReference>
<dbReference type="SMR" id="P23196"/>
<dbReference type="FunCoup" id="P23196">
    <property type="interactions" value="1980"/>
</dbReference>
<dbReference type="STRING" id="9913.ENSBTAP00000003559"/>
<dbReference type="PaxDb" id="9913-ENSBTAP00000003559"/>
<dbReference type="PeptideAtlas" id="P23196"/>
<dbReference type="GeneID" id="281630"/>
<dbReference type="KEGG" id="bta:281630"/>
<dbReference type="CTD" id="328"/>
<dbReference type="eggNOG" id="KOG1294">
    <property type="taxonomic scope" value="Eukaryota"/>
</dbReference>
<dbReference type="HOGENOM" id="CLU_027539_1_3_1"/>
<dbReference type="InParanoid" id="P23196"/>
<dbReference type="OrthoDB" id="498125at2759"/>
<dbReference type="TreeFam" id="TF315048"/>
<dbReference type="BRENDA" id="4.2.99.18">
    <property type="organism ID" value="908"/>
</dbReference>
<dbReference type="Proteomes" id="UP000009136">
    <property type="component" value="Unplaced"/>
</dbReference>
<dbReference type="GO" id="GO:0005737">
    <property type="term" value="C:cytoplasm"/>
    <property type="evidence" value="ECO:0000250"/>
    <property type="project" value="UniProtKB"/>
</dbReference>
<dbReference type="GO" id="GO:0005783">
    <property type="term" value="C:endoplasmic reticulum"/>
    <property type="evidence" value="ECO:0007669"/>
    <property type="project" value="UniProtKB-SubCell"/>
</dbReference>
<dbReference type="GO" id="GO:0005739">
    <property type="term" value="C:mitochondrion"/>
    <property type="evidence" value="ECO:0000250"/>
    <property type="project" value="UniProtKB"/>
</dbReference>
<dbReference type="GO" id="GO:0016607">
    <property type="term" value="C:nuclear speck"/>
    <property type="evidence" value="ECO:0000250"/>
    <property type="project" value="UniProtKB"/>
</dbReference>
<dbReference type="GO" id="GO:0005730">
    <property type="term" value="C:nucleolus"/>
    <property type="evidence" value="ECO:0000250"/>
    <property type="project" value="UniProtKB"/>
</dbReference>
<dbReference type="GO" id="GO:0005654">
    <property type="term" value="C:nucleoplasm"/>
    <property type="evidence" value="ECO:0000250"/>
    <property type="project" value="UniProtKB"/>
</dbReference>
<dbReference type="GO" id="GO:0005634">
    <property type="term" value="C:nucleus"/>
    <property type="evidence" value="ECO:0000250"/>
    <property type="project" value="UniProtKB"/>
</dbReference>
<dbReference type="GO" id="GO:0048471">
    <property type="term" value="C:perinuclear region of cytoplasm"/>
    <property type="evidence" value="ECO:0000250"/>
    <property type="project" value="AgBase"/>
</dbReference>
<dbReference type="GO" id="GO:0008408">
    <property type="term" value="F:3'-5' exonuclease activity"/>
    <property type="evidence" value="ECO:0000250"/>
    <property type="project" value="UniProtKB"/>
</dbReference>
<dbReference type="GO" id="GO:0031490">
    <property type="term" value="F:chromatin DNA binding"/>
    <property type="evidence" value="ECO:0000250"/>
    <property type="project" value="UniProtKB"/>
</dbReference>
<dbReference type="GO" id="GO:0052720">
    <property type="term" value="F:class II DNA-(apurinic or apyrimidinic site) endonuclease activity"/>
    <property type="evidence" value="ECO:0000250"/>
    <property type="project" value="UniProtKB"/>
</dbReference>
<dbReference type="GO" id="GO:0003684">
    <property type="term" value="F:damaged DNA binding"/>
    <property type="evidence" value="ECO:0000250"/>
    <property type="project" value="UniProtKB"/>
</dbReference>
<dbReference type="GO" id="GO:0003677">
    <property type="term" value="F:DNA binding"/>
    <property type="evidence" value="ECO:0000250"/>
    <property type="project" value="AgBase"/>
</dbReference>
<dbReference type="GO" id="GO:0140431">
    <property type="term" value="F:DNA-(abasic site) binding"/>
    <property type="evidence" value="ECO:0000250"/>
    <property type="project" value="UniProtKB"/>
</dbReference>
<dbReference type="GO" id="GO:0003906">
    <property type="term" value="F:DNA-(apurinic or apyrimidinic site) endonuclease activity"/>
    <property type="evidence" value="ECO:0000250"/>
    <property type="project" value="UniProtKB"/>
</dbReference>
<dbReference type="GO" id="GO:0008311">
    <property type="term" value="F:double-stranded DNA 3'-5' DNA exonuclease activity"/>
    <property type="evidence" value="ECO:0000318"/>
    <property type="project" value="GO_Central"/>
</dbReference>
<dbReference type="GO" id="GO:0046872">
    <property type="term" value="F:metal ion binding"/>
    <property type="evidence" value="ECO:0000250"/>
    <property type="project" value="AgBase"/>
</dbReference>
<dbReference type="GO" id="GO:0016491">
    <property type="term" value="F:oxidoreductase activity"/>
    <property type="evidence" value="ECO:0000250"/>
    <property type="project" value="UniProtKB"/>
</dbReference>
<dbReference type="GO" id="GO:0008081">
    <property type="term" value="F:phosphoric diester hydrolase activity"/>
    <property type="evidence" value="ECO:0000250"/>
    <property type="project" value="AgBase"/>
</dbReference>
<dbReference type="GO" id="GO:0003723">
    <property type="term" value="F:RNA binding"/>
    <property type="evidence" value="ECO:0007669"/>
    <property type="project" value="UniProtKB-KW"/>
</dbReference>
<dbReference type="GO" id="GO:0016890">
    <property type="term" value="F:site-specific endodeoxyribonuclease activity, specific for altered base"/>
    <property type="evidence" value="ECO:0000250"/>
    <property type="project" value="UniProtKB"/>
</dbReference>
<dbReference type="GO" id="GO:0003713">
    <property type="term" value="F:transcription coactivator activity"/>
    <property type="evidence" value="ECO:0000250"/>
    <property type="project" value="AgBase"/>
</dbReference>
<dbReference type="GO" id="GO:0006284">
    <property type="term" value="P:base-excision repair"/>
    <property type="evidence" value="ECO:0000318"/>
    <property type="project" value="GO_Central"/>
</dbReference>
<dbReference type="GO" id="GO:0006310">
    <property type="term" value="P:DNA recombination"/>
    <property type="evidence" value="ECO:0007669"/>
    <property type="project" value="UniProtKB-KW"/>
</dbReference>
<dbReference type="GO" id="GO:0006281">
    <property type="term" value="P:DNA repair"/>
    <property type="evidence" value="ECO:0000250"/>
    <property type="project" value="UniProtKB"/>
</dbReference>
<dbReference type="GO" id="GO:0044029">
    <property type="term" value="P:positive regulation of gene expression via chromosomal CpG island demethylation"/>
    <property type="evidence" value="ECO:0000250"/>
    <property type="project" value="UniProtKB"/>
</dbReference>
<dbReference type="GO" id="GO:0042981">
    <property type="term" value="P:regulation of apoptotic process"/>
    <property type="evidence" value="ECO:0000250"/>
    <property type="project" value="UniProtKB"/>
</dbReference>
<dbReference type="GO" id="GO:0043488">
    <property type="term" value="P:regulation of mRNA stability"/>
    <property type="evidence" value="ECO:0000250"/>
    <property type="project" value="UniProtKB"/>
</dbReference>
<dbReference type="CDD" id="cd09087">
    <property type="entry name" value="Ape1-like_AP-endo"/>
    <property type="match status" value="1"/>
</dbReference>
<dbReference type="FunFam" id="3.60.10.10:FF:000009">
    <property type="entry name" value="DNA-(apurinic or apyrimidinic site) lyase"/>
    <property type="match status" value="1"/>
</dbReference>
<dbReference type="Gene3D" id="3.60.10.10">
    <property type="entry name" value="Endonuclease/exonuclease/phosphatase"/>
    <property type="match status" value="1"/>
</dbReference>
<dbReference type="InterPro" id="IPR004808">
    <property type="entry name" value="AP_endonuc_1"/>
</dbReference>
<dbReference type="InterPro" id="IPR020847">
    <property type="entry name" value="AP_endonuclease_F1_BS"/>
</dbReference>
<dbReference type="InterPro" id="IPR020848">
    <property type="entry name" value="AP_endonuclease_F1_CS"/>
</dbReference>
<dbReference type="InterPro" id="IPR036691">
    <property type="entry name" value="Endo/exonu/phosph_ase_sf"/>
</dbReference>
<dbReference type="InterPro" id="IPR005135">
    <property type="entry name" value="Endo/exonuclease/phosphatase"/>
</dbReference>
<dbReference type="NCBIfam" id="TIGR00195">
    <property type="entry name" value="exoDNase_III"/>
    <property type="match status" value="1"/>
</dbReference>
<dbReference type="NCBIfam" id="TIGR00633">
    <property type="entry name" value="xth"/>
    <property type="match status" value="1"/>
</dbReference>
<dbReference type="PANTHER" id="PTHR22748">
    <property type="entry name" value="AP ENDONUCLEASE"/>
    <property type="match status" value="1"/>
</dbReference>
<dbReference type="PANTHER" id="PTHR22748:SF6">
    <property type="entry name" value="DNA-(APURINIC OR APYRIMIDINIC SITE) ENDONUCLEASE"/>
    <property type="match status" value="1"/>
</dbReference>
<dbReference type="Pfam" id="PF03372">
    <property type="entry name" value="Exo_endo_phos"/>
    <property type="match status" value="1"/>
</dbReference>
<dbReference type="SUPFAM" id="SSF56219">
    <property type="entry name" value="DNase I-like"/>
    <property type="match status" value="1"/>
</dbReference>
<dbReference type="PROSITE" id="PS00726">
    <property type="entry name" value="AP_NUCLEASE_F1_1"/>
    <property type="match status" value="1"/>
</dbReference>
<dbReference type="PROSITE" id="PS00727">
    <property type="entry name" value="AP_NUCLEASE_F1_2"/>
    <property type="match status" value="1"/>
</dbReference>
<dbReference type="PROSITE" id="PS00728">
    <property type="entry name" value="AP_NUCLEASE_F1_3"/>
    <property type="match status" value="1"/>
</dbReference>
<dbReference type="PROSITE" id="PS51435">
    <property type="entry name" value="AP_NUCLEASE_F1_4"/>
    <property type="match status" value="1"/>
</dbReference>
<evidence type="ECO:0000250" key="1"/>
<evidence type="ECO:0000250" key="2">
    <source>
        <dbReference type="UniProtKB" id="P27695"/>
    </source>
</evidence>
<evidence type="ECO:0000250" key="3">
    <source>
        <dbReference type="UniProtKB" id="P28352"/>
    </source>
</evidence>
<evidence type="ECO:0000255" key="4">
    <source>
        <dbReference type="PROSITE-ProRule" id="PRU00764"/>
    </source>
</evidence>
<evidence type="ECO:0000256" key="5">
    <source>
        <dbReference type="SAM" id="MobiDB-lite"/>
    </source>
</evidence>
<evidence type="ECO:0000269" key="6">
    <source>
    </source>
</evidence>
<evidence type="ECO:0000269" key="7">
    <source>
    </source>
</evidence>
<evidence type="ECO:0000269" key="8">
    <source>
    </source>
</evidence>
<evidence type="ECO:0000305" key="9"/>
<feature type="initiator methionine" description="Removed" evidence="7 8">
    <location>
        <position position="1"/>
    </location>
</feature>
<feature type="chain" id="PRO_0000200009" description="DNA repair nuclease/redox regulator APEX1">
    <location>
        <begin position="2"/>
        <end position="318"/>
    </location>
</feature>
<feature type="chain" id="PRO_0000402571" description="DNA repair nuclease/redox regulator APEX1, mitochondrial">
    <location>
        <begin position="32"/>
        <end position="318"/>
    </location>
</feature>
<feature type="region of interest" description="Disordered" evidence="5">
    <location>
        <begin position="1"/>
        <end position="59"/>
    </location>
</feature>
<feature type="region of interest" description="Necessary for interaction with YBX1, binding to RNA, association together with NPM1 to rRNA, endoribonuclease activity on abasic RNA and localization in the nucleoli" evidence="1">
    <location>
        <begin position="2"/>
        <end position="33"/>
    </location>
</feature>
<feature type="region of interest" description="Necessary for interaction with NPM1 and for efficient rRNA binding" evidence="1">
    <location>
        <begin position="23"/>
        <end position="33"/>
    </location>
</feature>
<feature type="region of interest" description="Mitochondrial targeting sequence (MTS)" evidence="1">
    <location>
        <begin position="289"/>
        <end position="318"/>
    </location>
</feature>
<feature type="short sequence motif" description="Nuclear localization signal (NLS)" evidence="1">
    <location>
        <begin position="8"/>
        <end position="13"/>
    </location>
</feature>
<feature type="short sequence motif" description="Nuclear export signal (NES)" evidence="1">
    <location>
        <begin position="64"/>
        <end position="80"/>
    </location>
</feature>
<feature type="compositionally biased region" description="Basic and acidic residues" evidence="5">
    <location>
        <begin position="16"/>
        <end position="38"/>
    </location>
</feature>
<feature type="active site" evidence="1">
    <location>
        <position position="171"/>
    </location>
</feature>
<feature type="active site" description="Proton donor/acceptor" evidence="1">
    <location>
        <position position="210"/>
    </location>
</feature>
<feature type="binding site" evidence="1">
    <location>
        <position position="70"/>
    </location>
    <ligand>
        <name>Mg(2+)</name>
        <dbReference type="ChEBI" id="CHEBI:18420"/>
        <label>1</label>
    </ligand>
</feature>
<feature type="binding site" evidence="1">
    <location>
        <position position="96"/>
    </location>
    <ligand>
        <name>Mg(2+)</name>
        <dbReference type="ChEBI" id="CHEBI:18420"/>
        <label>1</label>
    </ligand>
</feature>
<feature type="binding site" evidence="1">
    <location>
        <position position="210"/>
    </location>
    <ligand>
        <name>Mg(2+)</name>
        <dbReference type="ChEBI" id="CHEBI:18420"/>
        <label>2</label>
    </ligand>
</feature>
<feature type="binding site" evidence="1">
    <location>
        <position position="212"/>
    </location>
    <ligand>
        <name>Mg(2+)</name>
        <dbReference type="ChEBI" id="CHEBI:18420"/>
        <label>2</label>
    </ligand>
</feature>
<feature type="binding site" evidence="1">
    <location>
        <position position="308"/>
    </location>
    <ligand>
        <name>Mg(2+)</name>
        <dbReference type="ChEBI" id="CHEBI:18420"/>
        <label>1</label>
    </ligand>
</feature>
<feature type="site" description="Cleavage; by granzyme A" evidence="1">
    <location>
        <begin position="31"/>
        <end position="32"/>
    </location>
</feature>
<feature type="site" description="Transition state stabilizer" evidence="1">
    <location>
        <position position="212"/>
    </location>
</feature>
<feature type="site" description="Important for catalytic activity" evidence="1">
    <location>
        <position position="283"/>
    </location>
</feature>
<feature type="site" description="Interaction with DNA substrate" evidence="1">
    <location>
        <position position="309"/>
    </location>
</feature>
<feature type="modified residue" description="N6-acetyllysine; by EP300" evidence="2">
    <location>
        <position position="6"/>
    </location>
</feature>
<feature type="modified residue" description="N6-acetyllysine; by EP300" evidence="2">
    <location>
        <position position="7"/>
    </location>
</feature>
<feature type="modified residue" description="N6-acetyllysine" evidence="2">
    <location>
        <position position="27"/>
    </location>
</feature>
<feature type="modified residue" description="N6-acetyllysine" evidence="2">
    <location>
        <position position="31"/>
    </location>
</feature>
<feature type="modified residue" description="N6-acetyllysine" evidence="2">
    <location>
        <position position="32"/>
    </location>
</feature>
<feature type="modified residue" description="N6-acetyllysine" evidence="2">
    <location>
        <position position="35"/>
    </location>
</feature>
<feature type="modified residue" description="Phosphoserine" evidence="2">
    <location>
        <position position="54"/>
    </location>
</feature>
<feature type="modified residue" description="S-nitrosocysteine; alternate" evidence="2">
    <location>
        <position position="65"/>
    </location>
</feature>
<feature type="modified residue" description="S-nitrosocysteine; alternate" evidence="2">
    <location>
        <position position="93"/>
    </location>
</feature>
<feature type="modified residue" description="N6-acetyllysine" evidence="2">
    <location>
        <position position="197"/>
    </location>
</feature>
<feature type="modified residue" description="Phosphothreonine; by CDK5" evidence="3">
    <location>
        <position position="233"/>
    </location>
</feature>
<feature type="modified residue" description="S-nitrosocysteine" evidence="2">
    <location>
        <position position="310"/>
    </location>
</feature>
<feature type="disulfide bond" description="Alternate" evidence="1">
    <location>
        <begin position="65"/>
        <end position="93"/>
    </location>
</feature>
<feature type="sequence conflict" description="In Ref. 3; AA sequence." evidence="9" ref="3">
    <original>PE</original>
    <variation>LP</variation>
    <location>
        <begin position="21"/>
        <end position="22"/>
    </location>
</feature>
<feature type="sequence conflict" description="In Ref. 2; AAI22611." evidence="9" ref="2">
    <original>V</original>
    <variation>L</variation>
    <location>
        <position position="291"/>
    </location>
</feature>
<gene>
    <name type="primary">APEX1</name>
    <name type="synonym">APE</name>
    <name type="synonym">APEX</name>
    <name type="synonym">BAP1</name>
    <name type="synonym">REF1</name>
</gene>
<protein>
    <recommendedName>
        <fullName>DNA repair nuclease/redox regulator APEX1</fullName>
        <ecNumber evidence="2">3.1.11.2</ecNumber>
        <ecNumber evidence="2">3.1.21.-</ecNumber>
    </recommendedName>
    <alternativeName>
        <fullName>APEX nuclease</fullName>
        <shortName>APEN</shortName>
    </alternativeName>
    <alternativeName>
        <fullName>Apurinic-apyrimidinic endonuclease 1</fullName>
        <shortName>AP endonuclease 1</shortName>
    </alternativeName>
    <alternativeName>
        <fullName>Redox factor-1</fullName>
        <shortName>REF-1</shortName>
    </alternativeName>
    <component>
        <recommendedName>
            <fullName>DNA repair nuclease/redox regulator APEX1, mitochondrial</fullName>
        </recommendedName>
    </component>
</protein>
<keyword id="KW-0007">Acetylation</keyword>
<keyword id="KW-0010">Activator</keyword>
<keyword id="KW-0165">Cleavage on pair of basic residues</keyword>
<keyword id="KW-0963">Cytoplasm</keyword>
<keyword id="KW-0903">Direct protein sequencing</keyword>
<keyword id="KW-1015">Disulfide bond</keyword>
<keyword id="KW-0227">DNA damage</keyword>
<keyword id="KW-0233">DNA recombination</keyword>
<keyword id="KW-0234">DNA repair</keyword>
<keyword id="KW-0238">DNA-binding</keyword>
<keyword id="KW-0255">Endonuclease</keyword>
<keyword id="KW-0256">Endoplasmic reticulum</keyword>
<keyword id="KW-0269">Exonuclease</keyword>
<keyword id="KW-0378">Hydrolase</keyword>
<keyword id="KW-0460">Magnesium</keyword>
<keyword id="KW-0479">Metal-binding</keyword>
<keyword id="KW-0496">Mitochondrion</keyword>
<keyword id="KW-0540">Nuclease</keyword>
<keyword id="KW-0539">Nucleus</keyword>
<keyword id="KW-0597">Phosphoprotein</keyword>
<keyword id="KW-1185">Reference proteome</keyword>
<keyword id="KW-0678">Repressor</keyword>
<keyword id="KW-0694">RNA-binding</keyword>
<keyword id="KW-0702">S-nitrosylation</keyword>
<keyword id="KW-0804">Transcription</keyword>
<keyword id="KW-0805">Transcription regulation</keyword>
<keyword id="KW-0832">Ubl conjugation</keyword>
<name>APEX1_BOVIN</name>